<feature type="chain" id="PRO_1000128835" description="Adenine deaminase">
    <location>
        <begin position="1"/>
        <end position="350"/>
    </location>
</feature>
<feature type="active site" description="Proton donor" evidence="1">
    <location>
        <position position="210"/>
    </location>
</feature>
<feature type="binding site" evidence="1">
    <location>
        <position position="24"/>
    </location>
    <ligand>
        <name>Zn(2+)</name>
        <dbReference type="ChEBI" id="CHEBI:29105"/>
        <note>catalytic</note>
    </ligand>
</feature>
<feature type="binding site" evidence="1">
    <location>
        <position position="26"/>
    </location>
    <ligand>
        <name>Zn(2+)</name>
        <dbReference type="ChEBI" id="CHEBI:29105"/>
        <note>catalytic</note>
    </ligand>
</feature>
<feature type="binding site" evidence="1">
    <location>
        <position position="207"/>
    </location>
    <ligand>
        <name>Zn(2+)</name>
        <dbReference type="ChEBI" id="CHEBI:29105"/>
        <note>catalytic</note>
    </ligand>
</feature>
<feature type="binding site" evidence="1">
    <location>
        <position position="288"/>
    </location>
    <ligand>
        <name>Zn(2+)</name>
        <dbReference type="ChEBI" id="CHEBI:29105"/>
        <note>catalytic</note>
    </ligand>
</feature>
<feature type="binding site" evidence="1">
    <location>
        <position position="289"/>
    </location>
    <ligand>
        <name>substrate</name>
    </ligand>
</feature>
<feature type="site" description="Important for catalytic activity" evidence="1">
    <location>
        <position position="231"/>
    </location>
</feature>
<dbReference type="EC" id="3.5.4.2" evidence="1"/>
<dbReference type="EMBL" id="CP001052">
    <property type="protein sequence ID" value="ACD17436.1"/>
    <property type="molecule type" value="Genomic_DNA"/>
</dbReference>
<dbReference type="RefSeq" id="WP_012434015.1">
    <property type="nucleotide sequence ID" value="NC_010681.1"/>
</dbReference>
<dbReference type="SMR" id="B2T672"/>
<dbReference type="STRING" id="398527.Bphyt_3044"/>
<dbReference type="KEGG" id="bpy:Bphyt_3044"/>
<dbReference type="eggNOG" id="COG1816">
    <property type="taxonomic scope" value="Bacteria"/>
</dbReference>
<dbReference type="HOGENOM" id="CLU_039228_7_0_4"/>
<dbReference type="OrthoDB" id="105475at2"/>
<dbReference type="Proteomes" id="UP000001739">
    <property type="component" value="Chromosome 1"/>
</dbReference>
<dbReference type="GO" id="GO:0005829">
    <property type="term" value="C:cytosol"/>
    <property type="evidence" value="ECO:0007669"/>
    <property type="project" value="TreeGrafter"/>
</dbReference>
<dbReference type="GO" id="GO:0000034">
    <property type="term" value="F:adenine deaminase activity"/>
    <property type="evidence" value="ECO:0007669"/>
    <property type="project" value="UniProtKB-UniRule"/>
</dbReference>
<dbReference type="GO" id="GO:0008270">
    <property type="term" value="F:zinc ion binding"/>
    <property type="evidence" value="ECO:0007669"/>
    <property type="project" value="UniProtKB-UniRule"/>
</dbReference>
<dbReference type="GO" id="GO:0006146">
    <property type="term" value="P:adenine catabolic process"/>
    <property type="evidence" value="ECO:0007669"/>
    <property type="project" value="UniProtKB-UniRule"/>
</dbReference>
<dbReference type="GO" id="GO:0043103">
    <property type="term" value="P:hypoxanthine salvage"/>
    <property type="evidence" value="ECO:0007669"/>
    <property type="project" value="UniProtKB-UniRule"/>
</dbReference>
<dbReference type="GO" id="GO:0009117">
    <property type="term" value="P:nucleotide metabolic process"/>
    <property type="evidence" value="ECO:0007669"/>
    <property type="project" value="UniProtKB-KW"/>
</dbReference>
<dbReference type="CDD" id="cd01320">
    <property type="entry name" value="ADA"/>
    <property type="match status" value="1"/>
</dbReference>
<dbReference type="FunFam" id="3.20.20.140:FF:000039">
    <property type="entry name" value="Adenine deaminase"/>
    <property type="match status" value="1"/>
</dbReference>
<dbReference type="Gene3D" id="3.20.20.140">
    <property type="entry name" value="Metal-dependent hydrolases"/>
    <property type="match status" value="1"/>
</dbReference>
<dbReference type="HAMAP" id="MF_01962">
    <property type="entry name" value="Adenine_deaminase"/>
    <property type="match status" value="1"/>
</dbReference>
<dbReference type="InterPro" id="IPR001365">
    <property type="entry name" value="A_deaminase_dom"/>
</dbReference>
<dbReference type="InterPro" id="IPR028892">
    <property type="entry name" value="ADE"/>
</dbReference>
<dbReference type="InterPro" id="IPR006330">
    <property type="entry name" value="Ado/ade_deaminase"/>
</dbReference>
<dbReference type="InterPro" id="IPR032466">
    <property type="entry name" value="Metal_Hydrolase"/>
</dbReference>
<dbReference type="NCBIfam" id="TIGR01430">
    <property type="entry name" value="aden_deam"/>
    <property type="match status" value="1"/>
</dbReference>
<dbReference type="NCBIfam" id="NF006850">
    <property type="entry name" value="PRK09358.1-6"/>
    <property type="match status" value="1"/>
</dbReference>
<dbReference type="PANTHER" id="PTHR43114">
    <property type="entry name" value="ADENINE DEAMINASE"/>
    <property type="match status" value="1"/>
</dbReference>
<dbReference type="PANTHER" id="PTHR43114:SF6">
    <property type="entry name" value="ADENINE DEAMINASE"/>
    <property type="match status" value="1"/>
</dbReference>
<dbReference type="Pfam" id="PF00962">
    <property type="entry name" value="A_deaminase"/>
    <property type="match status" value="1"/>
</dbReference>
<dbReference type="SUPFAM" id="SSF51556">
    <property type="entry name" value="Metallo-dependent hydrolases"/>
    <property type="match status" value="1"/>
</dbReference>
<comment type="function">
    <text evidence="1">Catalyzes the hydrolytic deamination of adenine to hypoxanthine. Plays an important role in the purine salvage pathway and in nitrogen catabolism.</text>
</comment>
<comment type="catalytic activity">
    <reaction evidence="1">
        <text>adenine + H2O + H(+) = hypoxanthine + NH4(+)</text>
        <dbReference type="Rhea" id="RHEA:23688"/>
        <dbReference type="ChEBI" id="CHEBI:15377"/>
        <dbReference type="ChEBI" id="CHEBI:15378"/>
        <dbReference type="ChEBI" id="CHEBI:16708"/>
        <dbReference type="ChEBI" id="CHEBI:17368"/>
        <dbReference type="ChEBI" id="CHEBI:28938"/>
        <dbReference type="EC" id="3.5.4.2"/>
    </reaction>
</comment>
<comment type="cofactor">
    <cofactor evidence="1">
        <name>Zn(2+)</name>
        <dbReference type="ChEBI" id="CHEBI:29105"/>
    </cofactor>
    <text evidence="1">Binds 1 zinc ion per subunit.</text>
</comment>
<comment type="similarity">
    <text evidence="1">Belongs to the metallo-dependent hydrolases superfamily. Adenosine and AMP deaminases family. Adenine deaminase type 2 subfamily.</text>
</comment>
<name>ADE_PARPJ</name>
<accession>B2T672</accession>
<organism>
    <name type="scientific">Paraburkholderia phytofirmans (strain DSM 17436 / LMG 22146 / PsJN)</name>
    <name type="common">Burkholderia phytofirmans</name>
    <dbReference type="NCBI Taxonomy" id="398527"/>
    <lineage>
        <taxon>Bacteria</taxon>
        <taxon>Pseudomonadati</taxon>
        <taxon>Pseudomonadota</taxon>
        <taxon>Betaproteobacteria</taxon>
        <taxon>Burkholderiales</taxon>
        <taxon>Burkholderiaceae</taxon>
        <taxon>Paraburkholderia</taxon>
    </lineage>
</organism>
<proteinExistence type="inferred from homology"/>
<gene>
    <name type="ordered locus">Bphyt_3044</name>
</gene>
<sequence>MTTTTVTPTPLAEKTALAPKAELHIHIEGSLEPELIFALAERNGVKLAYDSIDALRAAYAFTDLQSFLDIYYAGASVLLHEQDFYDMTMAYVERCLADNVIHSEIFFDPQTHTERGVPIATVVAGIERALADAEKRGMTSKLILCFLRHLSEEDALATFEEALPLFEQYKHRLIGVGLDSSERGHPPSKFERVFAKARALGLKLVAHAGEEGPPSYIYEALDLLKVDRVDHGVRSIEDPALVTRLADSRVALTVCPLSNLKLCVFDDLTKHTLKDLLDRGVAVTVNSDDPAYFGGYVNANYFATIDALKLNDAEVYTIIRNSFEASFVTPEQRSELIAKLDAHWHPSGPH</sequence>
<protein>
    <recommendedName>
        <fullName evidence="1">Adenine deaminase</fullName>
        <shortName evidence="1">ADE</shortName>
        <ecNumber evidence="1">3.5.4.2</ecNumber>
    </recommendedName>
    <alternativeName>
        <fullName evidence="1">Adenine aminohydrolase</fullName>
        <shortName evidence="1">AAH</shortName>
    </alternativeName>
</protein>
<evidence type="ECO:0000255" key="1">
    <source>
        <dbReference type="HAMAP-Rule" id="MF_01962"/>
    </source>
</evidence>
<reference key="1">
    <citation type="journal article" date="2011" name="J. Bacteriol.">
        <title>Complete genome sequence of the plant growth-promoting endophyte Burkholderia phytofirmans strain PsJN.</title>
        <authorList>
            <person name="Weilharter A."/>
            <person name="Mitter B."/>
            <person name="Shin M.V."/>
            <person name="Chain P.S."/>
            <person name="Nowak J."/>
            <person name="Sessitsch A."/>
        </authorList>
    </citation>
    <scope>NUCLEOTIDE SEQUENCE [LARGE SCALE GENOMIC DNA]</scope>
    <source>
        <strain>DSM 17436 / LMG 22146 / PsJN</strain>
    </source>
</reference>
<keyword id="KW-0378">Hydrolase</keyword>
<keyword id="KW-0479">Metal-binding</keyword>
<keyword id="KW-0546">Nucleotide metabolism</keyword>
<keyword id="KW-0862">Zinc</keyword>